<dbReference type="EC" id="6.3.1.2"/>
<dbReference type="EMBL" id="X52760">
    <property type="protein sequence ID" value="CAA36971.1"/>
    <property type="molecule type" value="mRNA"/>
</dbReference>
<dbReference type="EMBL" id="AJ012460">
    <property type="protein sequence ID" value="CAA10031.1"/>
    <property type="molecule type" value="mRNA"/>
</dbReference>
<dbReference type="EMBL" id="AE014134">
    <property type="protein sequence ID" value="AAF51546.1"/>
    <property type="molecule type" value="Genomic_DNA"/>
</dbReference>
<dbReference type="EMBL" id="AE014134">
    <property type="protein sequence ID" value="AAF51547.1"/>
    <property type="molecule type" value="Genomic_DNA"/>
</dbReference>
<dbReference type="EMBL" id="AY058730">
    <property type="protein sequence ID" value="AAL13959.1"/>
    <property type="molecule type" value="mRNA"/>
</dbReference>
<dbReference type="PIR" id="S09109">
    <property type="entry name" value="AJFF1M"/>
</dbReference>
<dbReference type="RefSeq" id="NP_001162839.1">
    <property type="nucleotide sequence ID" value="NM_001169368.3"/>
</dbReference>
<dbReference type="RefSeq" id="NP_476570.1">
    <property type="nucleotide sequence ID" value="NM_057222.4"/>
</dbReference>
<dbReference type="RefSeq" id="NP_722606.1">
    <property type="nucleotide sequence ID" value="NM_164367.2"/>
</dbReference>
<dbReference type="SMR" id="P20477"/>
<dbReference type="BioGRID" id="59433">
    <property type="interactions" value="28"/>
</dbReference>
<dbReference type="FunCoup" id="P20477">
    <property type="interactions" value="586"/>
</dbReference>
<dbReference type="IntAct" id="P20477">
    <property type="interactions" value="85"/>
</dbReference>
<dbReference type="STRING" id="7227.FBpp0077774"/>
<dbReference type="PaxDb" id="7227-FBpp0077773"/>
<dbReference type="DNASU" id="33172"/>
<dbReference type="EnsemblMetazoa" id="FBtr0078114">
    <property type="protein sequence ID" value="FBpp0077773"/>
    <property type="gene ID" value="FBgn0001142"/>
</dbReference>
<dbReference type="EnsemblMetazoa" id="FBtr0078115">
    <property type="protein sequence ID" value="FBpp0077774"/>
    <property type="gene ID" value="FBgn0001142"/>
</dbReference>
<dbReference type="EnsemblMetazoa" id="FBtr0300568">
    <property type="protein sequence ID" value="FBpp0289795"/>
    <property type="gene ID" value="FBgn0001142"/>
</dbReference>
<dbReference type="GeneID" id="33172"/>
<dbReference type="KEGG" id="dme:Dmel_CG2718"/>
<dbReference type="AGR" id="FB:FBgn0001142"/>
<dbReference type="CTD" id="33172"/>
<dbReference type="FlyBase" id="FBgn0001142">
    <property type="gene designation" value="Gs1"/>
</dbReference>
<dbReference type="VEuPathDB" id="VectorBase:FBgn0001142"/>
<dbReference type="eggNOG" id="KOG0683">
    <property type="taxonomic scope" value="Eukaryota"/>
</dbReference>
<dbReference type="HOGENOM" id="CLU_036762_1_1_1"/>
<dbReference type="InParanoid" id="P20477"/>
<dbReference type="OMA" id="HAVACLY"/>
<dbReference type="OrthoDB" id="1936100at2759"/>
<dbReference type="PhylomeDB" id="P20477"/>
<dbReference type="Reactome" id="R-DME-210455">
    <property type="pathway name" value="Astrocytic Glutamate-Glutamine Uptake And Metabolism"/>
</dbReference>
<dbReference type="Reactome" id="R-DME-8964539">
    <property type="pathway name" value="Glutamate and glutamine metabolism"/>
</dbReference>
<dbReference type="BioGRID-ORCS" id="33172">
    <property type="hits" value="0 hits in 1 CRISPR screen"/>
</dbReference>
<dbReference type="GenomeRNAi" id="33172"/>
<dbReference type="PRO" id="PR:P20477"/>
<dbReference type="Proteomes" id="UP000000803">
    <property type="component" value="Chromosome 2L"/>
</dbReference>
<dbReference type="Bgee" id="FBgn0001142">
    <property type="expression patterns" value="Expressed in embryonic/larval hemocyte (Drosophila) and 219 other cell types or tissues"/>
</dbReference>
<dbReference type="ExpressionAtlas" id="P20477">
    <property type="expression patterns" value="baseline and differential"/>
</dbReference>
<dbReference type="GO" id="GO:0005737">
    <property type="term" value="C:cytoplasm"/>
    <property type="evidence" value="ECO:0000318"/>
    <property type="project" value="GO_Central"/>
</dbReference>
<dbReference type="GO" id="GO:0005739">
    <property type="term" value="C:mitochondrion"/>
    <property type="evidence" value="ECO:0000314"/>
    <property type="project" value="FlyBase"/>
</dbReference>
<dbReference type="GO" id="GO:0005524">
    <property type="term" value="F:ATP binding"/>
    <property type="evidence" value="ECO:0007669"/>
    <property type="project" value="UniProtKB-KW"/>
</dbReference>
<dbReference type="GO" id="GO:0004356">
    <property type="term" value="F:glutamine synthetase activity"/>
    <property type="evidence" value="ECO:0000314"/>
    <property type="project" value="FlyBase"/>
</dbReference>
<dbReference type="GO" id="GO:0006542">
    <property type="term" value="P:glutamine biosynthetic process"/>
    <property type="evidence" value="ECO:0000318"/>
    <property type="project" value="GO_Central"/>
</dbReference>
<dbReference type="GO" id="GO:1901704">
    <property type="term" value="P:L-glutamine biosynthetic process"/>
    <property type="evidence" value="ECO:0000315"/>
    <property type="project" value="FlyBase"/>
</dbReference>
<dbReference type="GO" id="GO:0006909">
    <property type="term" value="P:phagocytosis"/>
    <property type="evidence" value="ECO:0000315"/>
    <property type="project" value="FlyBase"/>
</dbReference>
<dbReference type="FunFam" id="3.10.20.70:FF:000004">
    <property type="entry name" value="Glutamine synthetase"/>
    <property type="match status" value="1"/>
</dbReference>
<dbReference type="FunFam" id="3.30.590.10:FF:000004">
    <property type="entry name" value="Glutamine synthetase"/>
    <property type="match status" value="1"/>
</dbReference>
<dbReference type="Gene3D" id="3.10.20.70">
    <property type="entry name" value="Glutamine synthetase, N-terminal domain"/>
    <property type="match status" value="1"/>
</dbReference>
<dbReference type="Gene3D" id="3.30.590.10">
    <property type="entry name" value="Glutamine synthetase/guanido kinase, catalytic domain"/>
    <property type="match status" value="1"/>
</dbReference>
<dbReference type="InterPro" id="IPR008147">
    <property type="entry name" value="Gln_synt_N"/>
</dbReference>
<dbReference type="InterPro" id="IPR036651">
    <property type="entry name" value="Gln_synt_N_sf"/>
</dbReference>
<dbReference type="InterPro" id="IPR014746">
    <property type="entry name" value="Gln_synth/guanido_kin_cat_dom"/>
</dbReference>
<dbReference type="InterPro" id="IPR008146">
    <property type="entry name" value="Gln_synth_cat_dom"/>
</dbReference>
<dbReference type="InterPro" id="IPR027303">
    <property type="entry name" value="Gln_synth_gly_rich_site"/>
</dbReference>
<dbReference type="InterPro" id="IPR027302">
    <property type="entry name" value="Gln_synth_N_conserv_site"/>
</dbReference>
<dbReference type="InterPro" id="IPR050292">
    <property type="entry name" value="Glutamine_Synthetase"/>
</dbReference>
<dbReference type="PANTHER" id="PTHR20852">
    <property type="entry name" value="GLUTAMINE SYNTHETASE"/>
    <property type="match status" value="1"/>
</dbReference>
<dbReference type="PANTHER" id="PTHR20852:SF44">
    <property type="entry name" value="GLUTAMINE SYNTHETASE 1, MITOCHONDRIAL"/>
    <property type="match status" value="1"/>
</dbReference>
<dbReference type="Pfam" id="PF00120">
    <property type="entry name" value="Gln-synt_C"/>
    <property type="match status" value="1"/>
</dbReference>
<dbReference type="SMART" id="SM01230">
    <property type="entry name" value="Gln-synt_C"/>
    <property type="match status" value="1"/>
</dbReference>
<dbReference type="SUPFAM" id="SSF54368">
    <property type="entry name" value="Glutamine synthetase, N-terminal domain"/>
    <property type="match status" value="1"/>
</dbReference>
<dbReference type="SUPFAM" id="SSF55931">
    <property type="entry name" value="Glutamine synthetase/guanido kinase"/>
    <property type="match status" value="1"/>
</dbReference>
<dbReference type="PROSITE" id="PS00180">
    <property type="entry name" value="GLNA_1"/>
    <property type="match status" value="1"/>
</dbReference>
<dbReference type="PROSITE" id="PS00181">
    <property type="entry name" value="GLNA_ATP"/>
    <property type="match status" value="1"/>
</dbReference>
<dbReference type="PROSITE" id="PS51986">
    <property type="entry name" value="GS_BETA_GRASP"/>
    <property type="match status" value="1"/>
</dbReference>
<dbReference type="PROSITE" id="PS51987">
    <property type="entry name" value="GS_CATALYTIC"/>
    <property type="match status" value="1"/>
</dbReference>
<comment type="catalytic activity">
    <reaction>
        <text>L-glutamate + NH4(+) + ATP = L-glutamine + ADP + phosphate + H(+)</text>
        <dbReference type="Rhea" id="RHEA:16169"/>
        <dbReference type="ChEBI" id="CHEBI:15378"/>
        <dbReference type="ChEBI" id="CHEBI:28938"/>
        <dbReference type="ChEBI" id="CHEBI:29985"/>
        <dbReference type="ChEBI" id="CHEBI:30616"/>
        <dbReference type="ChEBI" id="CHEBI:43474"/>
        <dbReference type="ChEBI" id="CHEBI:58359"/>
        <dbReference type="ChEBI" id="CHEBI:456216"/>
        <dbReference type="EC" id="6.3.1.2"/>
    </reaction>
</comment>
<comment type="subunit">
    <text>Homooctamer.</text>
</comment>
<comment type="subcellular location">
    <subcellularLocation>
        <location>Mitochondrion</location>
    </subcellularLocation>
</comment>
<comment type="similarity">
    <text evidence="4">Belongs to the glutamine synthetase family.</text>
</comment>
<feature type="transit peptide" description="Mitochondrion" evidence="1">
    <location>
        <begin position="1"/>
        <end position="27"/>
    </location>
</feature>
<feature type="chain" id="PRO_0000011173" description="Glutamine synthetase 1, mitochondrial">
    <location>
        <begin position="28"/>
        <end position="399"/>
    </location>
</feature>
<feature type="domain" description="GS beta-grasp" evidence="2">
    <location>
        <begin position="62"/>
        <end position="143"/>
    </location>
</feature>
<feature type="domain" description="GS catalytic" evidence="3">
    <location>
        <begin position="150"/>
        <end position="399"/>
    </location>
</feature>
<feature type="sequence conflict" description="In Ref. 2; CAA10031." evidence="4" ref="2">
    <original>A</original>
    <variation>R</variation>
    <location>
        <position position="2"/>
    </location>
</feature>
<feature type="sequence conflict" description="In Ref. 1; CAA36971." evidence="4" ref="1">
    <original>DVDGRP</original>
    <variation>RRGRTS</variation>
    <location>
        <begin position="178"/>
        <end position="183"/>
    </location>
</feature>
<feature type="sequence conflict" description="In Ref. 1; CAA36971." evidence="4" ref="1">
    <original>A</original>
    <variation>R</variation>
    <location>
        <position position="288"/>
    </location>
</feature>
<feature type="sequence conflict" description="In Ref. 1; CAA36971." evidence="4" ref="1">
    <original>A</original>
    <variation>P</variation>
    <location>
        <position position="309"/>
    </location>
</feature>
<feature type="sequence conflict" description="In Ref. 1; CAA36971." evidence="4" ref="1">
    <original>D</original>
    <variation>Y</variation>
    <location>
        <position position="325"/>
    </location>
</feature>
<feature type="sequence conflict" description="In Ref. 1; CAA36971." evidence="4" ref="1">
    <original>R</original>
    <variation>Q</variation>
    <location>
        <position position="393"/>
    </location>
</feature>
<gene>
    <name type="primary">Gs1</name>
    <name type="ORF">CG2718</name>
</gene>
<sequence>MALRVAGLFLKKELVAPATQQLRLLRTGNTTRSQFLANSPNTALDKSILQRYRNLETPANRVQATYLWIDGTGENIRLKDRVLDKVPSSVEDLPDWQYDGSSTYQAHGENSDTTLKPRAIYRDPFKPGKNDVIVLCDTYSADGKPTASNKRAAFQAAIDLISDQEPWFGIEQEYTLLDVDGRPFGWPENGFPAPQGPYYCGVGADRVYARDLVEAHVVACLYAGIDFAGTNAEVMPAQWEFQIGPAGIKACDDLWVSRYILQRIAEEYGVVVTFDPKPMEGQWNGAGAHTNFSTKEMRADGGIKAIEEAIEKLSKRHERHIKAYDPKEGKDNERRLVGRLETSSIDKFSWGVANRAVSVRVPRGVATAGKGYLEDRRPSSNCDPYAVCNAIVRTCLLNE</sequence>
<accession>P20477</accession>
<accession>A4UZX3</accession>
<accession>O96770</accession>
<accession>Q9VPK0</accession>
<protein>
    <recommendedName>
        <fullName>Glutamine synthetase 1, mitochondrial</fullName>
        <ecNumber>6.3.1.2</ecNumber>
    </recommendedName>
    <alternativeName>
        <fullName>Glutamate--ammonia ligase 1</fullName>
    </alternativeName>
</protein>
<evidence type="ECO:0000255" key="1"/>
<evidence type="ECO:0000255" key="2">
    <source>
        <dbReference type="PROSITE-ProRule" id="PRU01330"/>
    </source>
</evidence>
<evidence type="ECO:0000255" key="3">
    <source>
        <dbReference type="PROSITE-ProRule" id="PRU01331"/>
    </source>
</evidence>
<evidence type="ECO:0000305" key="4"/>
<organism>
    <name type="scientific">Drosophila melanogaster</name>
    <name type="common">Fruit fly</name>
    <dbReference type="NCBI Taxonomy" id="7227"/>
    <lineage>
        <taxon>Eukaryota</taxon>
        <taxon>Metazoa</taxon>
        <taxon>Ecdysozoa</taxon>
        <taxon>Arthropoda</taxon>
        <taxon>Hexapoda</taxon>
        <taxon>Insecta</taxon>
        <taxon>Pterygota</taxon>
        <taxon>Neoptera</taxon>
        <taxon>Endopterygota</taxon>
        <taxon>Diptera</taxon>
        <taxon>Brachycera</taxon>
        <taxon>Muscomorpha</taxon>
        <taxon>Ephydroidea</taxon>
        <taxon>Drosophilidae</taxon>
        <taxon>Drosophila</taxon>
        <taxon>Sophophora</taxon>
    </lineage>
</organism>
<keyword id="KW-0067">ATP-binding</keyword>
<keyword id="KW-0436">Ligase</keyword>
<keyword id="KW-0496">Mitochondrion</keyword>
<keyword id="KW-0547">Nucleotide-binding</keyword>
<keyword id="KW-1185">Reference proteome</keyword>
<keyword id="KW-0809">Transit peptide</keyword>
<proteinExistence type="evidence at transcript level"/>
<name>GLNA1_DROME</name>
<reference key="1">
    <citation type="journal article" date="1990" name="J. Mol. Biol.">
        <title>Homologous nuclear genes encode cytoplasmic and mitochondrial glutamine synthetase in Drosophila melanogaster.</title>
        <authorList>
            <person name="Caizzi R."/>
            <person name="Bozzetti M.P."/>
            <person name="Caggese C."/>
            <person name="Ritossa F."/>
        </authorList>
    </citation>
    <scope>NUCLEOTIDE SEQUENCE [MRNA]</scope>
</reference>
<reference key="2">
    <citation type="submission" date="1998-10" db="EMBL/GenBank/DDBJ databases">
        <authorList>
            <person name="Glover D.M."/>
        </authorList>
    </citation>
    <scope>NUCLEOTIDE SEQUENCE [MRNA]</scope>
</reference>
<reference key="3">
    <citation type="journal article" date="2000" name="Science">
        <title>The genome sequence of Drosophila melanogaster.</title>
        <authorList>
            <person name="Adams M.D."/>
            <person name="Celniker S.E."/>
            <person name="Holt R.A."/>
            <person name="Evans C.A."/>
            <person name="Gocayne J.D."/>
            <person name="Amanatides P.G."/>
            <person name="Scherer S.E."/>
            <person name="Li P.W."/>
            <person name="Hoskins R.A."/>
            <person name="Galle R.F."/>
            <person name="George R.A."/>
            <person name="Lewis S.E."/>
            <person name="Richards S."/>
            <person name="Ashburner M."/>
            <person name="Henderson S.N."/>
            <person name="Sutton G.G."/>
            <person name="Wortman J.R."/>
            <person name="Yandell M.D."/>
            <person name="Zhang Q."/>
            <person name="Chen L.X."/>
            <person name="Brandon R.C."/>
            <person name="Rogers Y.-H.C."/>
            <person name="Blazej R.G."/>
            <person name="Champe M."/>
            <person name="Pfeiffer B.D."/>
            <person name="Wan K.H."/>
            <person name="Doyle C."/>
            <person name="Baxter E.G."/>
            <person name="Helt G."/>
            <person name="Nelson C.R."/>
            <person name="Miklos G.L.G."/>
            <person name="Abril J.F."/>
            <person name="Agbayani A."/>
            <person name="An H.-J."/>
            <person name="Andrews-Pfannkoch C."/>
            <person name="Baldwin D."/>
            <person name="Ballew R.M."/>
            <person name="Basu A."/>
            <person name="Baxendale J."/>
            <person name="Bayraktaroglu L."/>
            <person name="Beasley E.M."/>
            <person name="Beeson K.Y."/>
            <person name="Benos P.V."/>
            <person name="Berman B.P."/>
            <person name="Bhandari D."/>
            <person name="Bolshakov S."/>
            <person name="Borkova D."/>
            <person name="Botchan M.R."/>
            <person name="Bouck J."/>
            <person name="Brokstein P."/>
            <person name="Brottier P."/>
            <person name="Burtis K.C."/>
            <person name="Busam D.A."/>
            <person name="Butler H."/>
            <person name="Cadieu E."/>
            <person name="Center A."/>
            <person name="Chandra I."/>
            <person name="Cherry J.M."/>
            <person name="Cawley S."/>
            <person name="Dahlke C."/>
            <person name="Davenport L.B."/>
            <person name="Davies P."/>
            <person name="de Pablos B."/>
            <person name="Delcher A."/>
            <person name="Deng Z."/>
            <person name="Mays A.D."/>
            <person name="Dew I."/>
            <person name="Dietz S.M."/>
            <person name="Dodson K."/>
            <person name="Doup L.E."/>
            <person name="Downes M."/>
            <person name="Dugan-Rocha S."/>
            <person name="Dunkov B.C."/>
            <person name="Dunn P."/>
            <person name="Durbin K.J."/>
            <person name="Evangelista C.C."/>
            <person name="Ferraz C."/>
            <person name="Ferriera S."/>
            <person name="Fleischmann W."/>
            <person name="Fosler C."/>
            <person name="Gabrielian A.E."/>
            <person name="Garg N.S."/>
            <person name="Gelbart W.M."/>
            <person name="Glasser K."/>
            <person name="Glodek A."/>
            <person name="Gong F."/>
            <person name="Gorrell J.H."/>
            <person name="Gu Z."/>
            <person name="Guan P."/>
            <person name="Harris M."/>
            <person name="Harris N.L."/>
            <person name="Harvey D.A."/>
            <person name="Heiman T.J."/>
            <person name="Hernandez J.R."/>
            <person name="Houck J."/>
            <person name="Hostin D."/>
            <person name="Houston K.A."/>
            <person name="Howland T.J."/>
            <person name="Wei M.-H."/>
            <person name="Ibegwam C."/>
            <person name="Jalali M."/>
            <person name="Kalush F."/>
            <person name="Karpen G.H."/>
            <person name="Ke Z."/>
            <person name="Kennison J.A."/>
            <person name="Ketchum K.A."/>
            <person name="Kimmel B.E."/>
            <person name="Kodira C.D."/>
            <person name="Kraft C.L."/>
            <person name="Kravitz S."/>
            <person name="Kulp D."/>
            <person name="Lai Z."/>
            <person name="Lasko P."/>
            <person name="Lei Y."/>
            <person name="Levitsky A.A."/>
            <person name="Li J.H."/>
            <person name="Li Z."/>
            <person name="Liang Y."/>
            <person name="Lin X."/>
            <person name="Liu X."/>
            <person name="Mattei B."/>
            <person name="McIntosh T.C."/>
            <person name="McLeod M.P."/>
            <person name="McPherson D."/>
            <person name="Merkulov G."/>
            <person name="Milshina N.V."/>
            <person name="Mobarry C."/>
            <person name="Morris J."/>
            <person name="Moshrefi A."/>
            <person name="Mount S.M."/>
            <person name="Moy M."/>
            <person name="Murphy B."/>
            <person name="Murphy L."/>
            <person name="Muzny D.M."/>
            <person name="Nelson D.L."/>
            <person name="Nelson D.R."/>
            <person name="Nelson K.A."/>
            <person name="Nixon K."/>
            <person name="Nusskern D.R."/>
            <person name="Pacleb J.M."/>
            <person name="Palazzolo M."/>
            <person name="Pittman G.S."/>
            <person name="Pan S."/>
            <person name="Pollard J."/>
            <person name="Puri V."/>
            <person name="Reese M.G."/>
            <person name="Reinert K."/>
            <person name="Remington K."/>
            <person name="Saunders R.D.C."/>
            <person name="Scheeler F."/>
            <person name="Shen H."/>
            <person name="Shue B.C."/>
            <person name="Siden-Kiamos I."/>
            <person name="Simpson M."/>
            <person name="Skupski M.P."/>
            <person name="Smith T.J."/>
            <person name="Spier E."/>
            <person name="Spradling A.C."/>
            <person name="Stapleton M."/>
            <person name="Strong R."/>
            <person name="Sun E."/>
            <person name="Svirskas R."/>
            <person name="Tector C."/>
            <person name="Turner R."/>
            <person name="Venter E."/>
            <person name="Wang A.H."/>
            <person name="Wang X."/>
            <person name="Wang Z.-Y."/>
            <person name="Wassarman D.A."/>
            <person name="Weinstock G.M."/>
            <person name="Weissenbach J."/>
            <person name="Williams S.M."/>
            <person name="Woodage T."/>
            <person name="Worley K.C."/>
            <person name="Wu D."/>
            <person name="Yang S."/>
            <person name="Yao Q.A."/>
            <person name="Ye J."/>
            <person name="Yeh R.-F."/>
            <person name="Zaveri J.S."/>
            <person name="Zhan M."/>
            <person name="Zhang G."/>
            <person name="Zhao Q."/>
            <person name="Zheng L."/>
            <person name="Zheng X.H."/>
            <person name="Zhong F.N."/>
            <person name="Zhong W."/>
            <person name="Zhou X."/>
            <person name="Zhu S.C."/>
            <person name="Zhu X."/>
            <person name="Smith H.O."/>
            <person name="Gibbs R.A."/>
            <person name="Myers E.W."/>
            <person name="Rubin G.M."/>
            <person name="Venter J.C."/>
        </authorList>
    </citation>
    <scope>NUCLEOTIDE SEQUENCE [LARGE SCALE GENOMIC DNA]</scope>
    <source>
        <strain>Berkeley</strain>
    </source>
</reference>
<reference key="4">
    <citation type="journal article" date="2002" name="Genome Biol.">
        <title>Annotation of the Drosophila melanogaster euchromatic genome: a systematic review.</title>
        <authorList>
            <person name="Misra S."/>
            <person name="Crosby M.A."/>
            <person name="Mungall C.J."/>
            <person name="Matthews B.B."/>
            <person name="Campbell K.S."/>
            <person name="Hradecky P."/>
            <person name="Huang Y."/>
            <person name="Kaminker J.S."/>
            <person name="Millburn G.H."/>
            <person name="Prochnik S.E."/>
            <person name="Smith C.D."/>
            <person name="Tupy J.L."/>
            <person name="Whitfield E.J."/>
            <person name="Bayraktaroglu L."/>
            <person name="Berman B.P."/>
            <person name="Bettencourt B.R."/>
            <person name="Celniker S.E."/>
            <person name="de Grey A.D.N.J."/>
            <person name="Drysdale R.A."/>
            <person name="Harris N.L."/>
            <person name="Richter J."/>
            <person name="Russo S."/>
            <person name="Schroeder A.J."/>
            <person name="Shu S.Q."/>
            <person name="Stapleton M."/>
            <person name="Yamada C."/>
            <person name="Ashburner M."/>
            <person name="Gelbart W.M."/>
            <person name="Rubin G.M."/>
            <person name="Lewis S.E."/>
        </authorList>
    </citation>
    <scope>GENOME REANNOTATION</scope>
    <source>
        <strain>Berkeley</strain>
    </source>
</reference>
<reference key="5">
    <citation type="journal article" date="2002" name="Genome Biol.">
        <title>A Drosophila full-length cDNA resource.</title>
        <authorList>
            <person name="Stapleton M."/>
            <person name="Carlson J.W."/>
            <person name="Brokstein P."/>
            <person name="Yu C."/>
            <person name="Champe M."/>
            <person name="George R.A."/>
            <person name="Guarin H."/>
            <person name="Kronmiller B."/>
            <person name="Pacleb J.M."/>
            <person name="Park S."/>
            <person name="Wan K.H."/>
            <person name="Rubin G.M."/>
            <person name="Celniker S.E."/>
        </authorList>
    </citation>
    <scope>NUCLEOTIDE SEQUENCE [LARGE SCALE MRNA]</scope>
    <source>
        <strain>Berkeley</strain>
        <tissue>Embryo</tissue>
    </source>
</reference>